<evidence type="ECO:0000250" key="1"/>
<evidence type="ECO:0000305" key="2"/>
<organism>
    <name type="scientific">Ostreococcus tauri</name>
    <dbReference type="NCBI Taxonomy" id="70448"/>
    <lineage>
        <taxon>Eukaryota</taxon>
        <taxon>Viridiplantae</taxon>
        <taxon>Chlorophyta</taxon>
        <taxon>Mamiellophyceae</taxon>
        <taxon>Mamiellales</taxon>
        <taxon>Bathycoccaceae</taxon>
        <taxon>Ostreococcus</taxon>
    </lineage>
</organism>
<reference key="1">
    <citation type="journal article" date="2007" name="Mol. Biol. Evol.">
        <title>The complete chloroplast and mitochondrial DNA sequence of Ostreococcus tauri: organelle genomes of the smallest eukaryote are examples of compaction.</title>
        <authorList>
            <person name="Robbens S."/>
            <person name="Derelle E."/>
            <person name="Ferraz C."/>
            <person name="Wuyts J."/>
            <person name="Moreau H."/>
            <person name="Van de Peer Y."/>
        </authorList>
    </citation>
    <scope>NUCLEOTIDE SEQUENCE [LARGE SCALE GENOMIC DNA]</scope>
    <source>
        <strain>OTTH0595</strain>
    </source>
</reference>
<gene>
    <name type="primary">rps3</name>
    <name type="ordered locus">OtCpg00350</name>
</gene>
<proteinExistence type="inferred from homology"/>
<keyword id="KW-0150">Chloroplast</keyword>
<keyword id="KW-0934">Plastid</keyword>
<keyword id="KW-1185">Reference proteome</keyword>
<keyword id="KW-0687">Ribonucleoprotein</keyword>
<keyword id="KW-0689">Ribosomal protein</keyword>
<keyword id="KW-0694">RNA-binding</keyword>
<keyword id="KW-0699">rRNA-binding</keyword>
<dbReference type="EMBL" id="CR954199">
    <property type="protein sequence ID" value="CAL36360.1"/>
    <property type="molecule type" value="Genomic_DNA"/>
</dbReference>
<dbReference type="RefSeq" id="YP_717238.1">
    <property type="nucleotide sequence ID" value="NC_008289.1"/>
</dbReference>
<dbReference type="SMR" id="Q0P3L7"/>
<dbReference type="FunCoup" id="Q0P3L7">
    <property type="interactions" value="238"/>
</dbReference>
<dbReference type="STRING" id="70448.Q0P3L7"/>
<dbReference type="GeneID" id="4238843"/>
<dbReference type="KEGG" id="ota:OstapCp35"/>
<dbReference type="eggNOG" id="ENOG502QV63">
    <property type="taxonomic scope" value="Eukaryota"/>
</dbReference>
<dbReference type="InParanoid" id="Q0P3L7"/>
<dbReference type="Proteomes" id="UP000009170">
    <property type="component" value="Chloroplast"/>
</dbReference>
<dbReference type="GO" id="GO:0009507">
    <property type="term" value="C:chloroplast"/>
    <property type="evidence" value="ECO:0007669"/>
    <property type="project" value="UniProtKB-SubCell"/>
</dbReference>
<dbReference type="GO" id="GO:0022627">
    <property type="term" value="C:cytosolic small ribosomal subunit"/>
    <property type="evidence" value="ECO:0007669"/>
    <property type="project" value="TreeGrafter"/>
</dbReference>
<dbReference type="GO" id="GO:0019843">
    <property type="term" value="F:rRNA binding"/>
    <property type="evidence" value="ECO:0007669"/>
    <property type="project" value="UniProtKB-UniRule"/>
</dbReference>
<dbReference type="GO" id="GO:0003735">
    <property type="term" value="F:structural constituent of ribosome"/>
    <property type="evidence" value="ECO:0007669"/>
    <property type="project" value="InterPro"/>
</dbReference>
<dbReference type="GO" id="GO:0006412">
    <property type="term" value="P:translation"/>
    <property type="evidence" value="ECO:0007669"/>
    <property type="project" value="UniProtKB-UniRule"/>
</dbReference>
<dbReference type="CDD" id="cd02412">
    <property type="entry name" value="KH-II_30S_S3"/>
    <property type="match status" value="1"/>
</dbReference>
<dbReference type="FunFam" id="3.30.300.20:FF:000001">
    <property type="entry name" value="30S ribosomal protein S3"/>
    <property type="match status" value="1"/>
</dbReference>
<dbReference type="Gene3D" id="3.30.300.20">
    <property type="match status" value="1"/>
</dbReference>
<dbReference type="Gene3D" id="3.30.1140.32">
    <property type="entry name" value="Ribosomal protein S3, C-terminal domain"/>
    <property type="match status" value="1"/>
</dbReference>
<dbReference type="HAMAP" id="MF_01309_B">
    <property type="entry name" value="Ribosomal_uS3_B"/>
    <property type="match status" value="1"/>
</dbReference>
<dbReference type="InterPro" id="IPR015946">
    <property type="entry name" value="KH_dom-like_a/b"/>
</dbReference>
<dbReference type="InterPro" id="IPR004044">
    <property type="entry name" value="KH_dom_type_2"/>
</dbReference>
<dbReference type="InterPro" id="IPR009019">
    <property type="entry name" value="KH_sf_prok-type"/>
</dbReference>
<dbReference type="InterPro" id="IPR036419">
    <property type="entry name" value="Ribosomal_S3_C_sf"/>
</dbReference>
<dbReference type="InterPro" id="IPR005704">
    <property type="entry name" value="Ribosomal_uS3_bac-typ"/>
</dbReference>
<dbReference type="InterPro" id="IPR001351">
    <property type="entry name" value="Ribosomal_uS3_C"/>
</dbReference>
<dbReference type="InterPro" id="IPR018280">
    <property type="entry name" value="Ribosomal_uS3_CS"/>
</dbReference>
<dbReference type="NCBIfam" id="TIGR01009">
    <property type="entry name" value="rpsC_bact"/>
    <property type="match status" value="1"/>
</dbReference>
<dbReference type="PANTHER" id="PTHR11760">
    <property type="entry name" value="30S/40S RIBOSOMAL PROTEIN S3"/>
    <property type="match status" value="1"/>
</dbReference>
<dbReference type="PANTHER" id="PTHR11760:SF19">
    <property type="entry name" value="SMALL RIBOSOMAL SUBUNIT PROTEIN US3C"/>
    <property type="match status" value="1"/>
</dbReference>
<dbReference type="Pfam" id="PF07650">
    <property type="entry name" value="KH_2"/>
    <property type="match status" value="1"/>
</dbReference>
<dbReference type="Pfam" id="PF00189">
    <property type="entry name" value="Ribosomal_S3_C"/>
    <property type="match status" value="1"/>
</dbReference>
<dbReference type="SUPFAM" id="SSF54814">
    <property type="entry name" value="Prokaryotic type KH domain (KH-domain type II)"/>
    <property type="match status" value="1"/>
</dbReference>
<dbReference type="SUPFAM" id="SSF54821">
    <property type="entry name" value="Ribosomal protein S3 C-terminal domain"/>
    <property type="match status" value="1"/>
</dbReference>
<dbReference type="PROSITE" id="PS50823">
    <property type="entry name" value="KH_TYPE_2"/>
    <property type="match status" value="1"/>
</dbReference>
<dbReference type="PROSITE" id="PS00548">
    <property type="entry name" value="RIBOSOMAL_S3"/>
    <property type="match status" value="1"/>
</dbReference>
<comment type="subunit">
    <text evidence="1">Part of the 30S ribosomal subunit.</text>
</comment>
<comment type="subcellular location">
    <subcellularLocation>
        <location>Plastid</location>
        <location>Chloroplast</location>
    </subcellularLocation>
</comment>
<comment type="similarity">
    <text evidence="2">Belongs to the universal ribosomal protein uS3 family.</text>
</comment>
<name>RR3_OSTTA</name>
<protein>
    <recommendedName>
        <fullName evidence="2">Small ribosomal subunit protein uS3c</fullName>
    </recommendedName>
    <alternativeName>
        <fullName>30S ribosomal protein S3, chloroplastic</fullName>
    </alternativeName>
</protein>
<feature type="chain" id="PRO_0000276997" description="Small ribosomal subunit protein uS3c">
    <location>
        <begin position="1"/>
        <end position="211"/>
    </location>
</feature>
<feature type="domain" description="KH type-2">
    <location>
        <begin position="39"/>
        <end position="109"/>
    </location>
</feature>
<geneLocation type="chloroplast"/>
<sequence length="211" mass="23992">MGQKVHPIGFRIGVTQTHRSQWFAKPKDYAKLVEEDLLIREFAESRLPDAGISRINISRQVDRIEIEFFTARPRALVGAKGETLTQLRDEIKAKLPDTRNVALYVTKTQQPEMEAICIAENIAEQLEKRTPFRRTMRQAIMRARKAGAEGIKIQISGRLNGAEIARHEWAREGRVPLHTIRADIDYATARAQTIYGILGIKVWVCKGEKSC</sequence>
<accession>Q0P3L7</accession>